<evidence type="ECO:0000255" key="1">
    <source>
        <dbReference type="HAMAP-Rule" id="MF_01338"/>
    </source>
</evidence>
<evidence type="ECO:0000305" key="2"/>
<proteinExistence type="inferred from homology"/>
<geneLocation type="chloroplast"/>
<reference key="1">
    <citation type="journal article" date="2005" name="Mol. Biol. Evol.">
        <title>Analysis of Acorus calamus chloroplast genome and its phylogenetic implications.</title>
        <authorList>
            <person name="Goremykin V.V."/>
            <person name="Holland B."/>
            <person name="Hirsch-Ernst K.I."/>
            <person name="Hellwig F.H."/>
        </authorList>
    </citation>
    <scope>NUCLEOTIDE SEQUENCE [LARGE SCALE GENOMIC DNA]</scope>
</reference>
<dbReference type="EC" id="4.1.1.39" evidence="1"/>
<dbReference type="EMBL" id="AJ879453">
    <property type="protein sequence ID" value="CAI53802.1"/>
    <property type="status" value="ALT_INIT"/>
    <property type="molecule type" value="Genomic_DNA"/>
</dbReference>
<dbReference type="RefSeq" id="YP_319773.1">
    <property type="nucleotide sequence ID" value="NC_007407.1"/>
</dbReference>
<dbReference type="SMR" id="Q3V526"/>
<dbReference type="GeneID" id="3677476"/>
<dbReference type="GO" id="GO:0009507">
    <property type="term" value="C:chloroplast"/>
    <property type="evidence" value="ECO:0007669"/>
    <property type="project" value="UniProtKB-SubCell"/>
</dbReference>
<dbReference type="GO" id="GO:0000287">
    <property type="term" value="F:magnesium ion binding"/>
    <property type="evidence" value="ECO:0007669"/>
    <property type="project" value="UniProtKB-UniRule"/>
</dbReference>
<dbReference type="GO" id="GO:0004497">
    <property type="term" value="F:monooxygenase activity"/>
    <property type="evidence" value="ECO:0007669"/>
    <property type="project" value="UniProtKB-KW"/>
</dbReference>
<dbReference type="GO" id="GO:0016984">
    <property type="term" value="F:ribulose-bisphosphate carboxylase activity"/>
    <property type="evidence" value="ECO:0007669"/>
    <property type="project" value="UniProtKB-UniRule"/>
</dbReference>
<dbReference type="GO" id="GO:0009853">
    <property type="term" value="P:photorespiration"/>
    <property type="evidence" value="ECO:0007669"/>
    <property type="project" value="UniProtKB-KW"/>
</dbReference>
<dbReference type="GO" id="GO:0019253">
    <property type="term" value="P:reductive pentose-phosphate cycle"/>
    <property type="evidence" value="ECO:0007669"/>
    <property type="project" value="UniProtKB-UniRule"/>
</dbReference>
<dbReference type="CDD" id="cd08212">
    <property type="entry name" value="RuBisCO_large_I"/>
    <property type="match status" value="1"/>
</dbReference>
<dbReference type="FunFam" id="3.20.20.110:FF:000001">
    <property type="entry name" value="Ribulose bisphosphate carboxylase large chain"/>
    <property type="match status" value="1"/>
</dbReference>
<dbReference type="FunFam" id="3.30.70.150:FF:000001">
    <property type="entry name" value="Ribulose bisphosphate carboxylase large chain"/>
    <property type="match status" value="1"/>
</dbReference>
<dbReference type="Gene3D" id="3.20.20.110">
    <property type="entry name" value="Ribulose bisphosphate carboxylase, large subunit, C-terminal domain"/>
    <property type="match status" value="1"/>
</dbReference>
<dbReference type="Gene3D" id="3.30.70.150">
    <property type="entry name" value="RuBisCO large subunit, N-terminal domain"/>
    <property type="match status" value="1"/>
</dbReference>
<dbReference type="HAMAP" id="MF_01338">
    <property type="entry name" value="RuBisCO_L_type1"/>
    <property type="match status" value="1"/>
</dbReference>
<dbReference type="InterPro" id="IPR033966">
    <property type="entry name" value="RuBisCO"/>
</dbReference>
<dbReference type="InterPro" id="IPR020878">
    <property type="entry name" value="RuBisCo_large_chain_AS"/>
</dbReference>
<dbReference type="InterPro" id="IPR000685">
    <property type="entry name" value="RuBisCO_lsu_C"/>
</dbReference>
<dbReference type="InterPro" id="IPR036376">
    <property type="entry name" value="RuBisCO_lsu_C_sf"/>
</dbReference>
<dbReference type="InterPro" id="IPR017443">
    <property type="entry name" value="RuBisCO_lsu_fd_N"/>
</dbReference>
<dbReference type="InterPro" id="IPR036422">
    <property type="entry name" value="RuBisCO_lsu_N_sf"/>
</dbReference>
<dbReference type="InterPro" id="IPR020888">
    <property type="entry name" value="RuBisCO_lsuI"/>
</dbReference>
<dbReference type="NCBIfam" id="NF003252">
    <property type="entry name" value="PRK04208.1"/>
    <property type="match status" value="1"/>
</dbReference>
<dbReference type="PANTHER" id="PTHR42704">
    <property type="entry name" value="RIBULOSE BISPHOSPHATE CARBOXYLASE"/>
    <property type="match status" value="1"/>
</dbReference>
<dbReference type="PANTHER" id="PTHR42704:SF15">
    <property type="entry name" value="RIBULOSE BISPHOSPHATE CARBOXYLASE LARGE CHAIN"/>
    <property type="match status" value="1"/>
</dbReference>
<dbReference type="Pfam" id="PF00016">
    <property type="entry name" value="RuBisCO_large"/>
    <property type="match status" value="1"/>
</dbReference>
<dbReference type="Pfam" id="PF02788">
    <property type="entry name" value="RuBisCO_large_N"/>
    <property type="match status" value="1"/>
</dbReference>
<dbReference type="SFLD" id="SFLDG01052">
    <property type="entry name" value="RuBisCO"/>
    <property type="match status" value="1"/>
</dbReference>
<dbReference type="SFLD" id="SFLDS00014">
    <property type="entry name" value="RuBisCO"/>
    <property type="match status" value="1"/>
</dbReference>
<dbReference type="SFLD" id="SFLDG00301">
    <property type="entry name" value="RuBisCO-like_proteins"/>
    <property type="match status" value="1"/>
</dbReference>
<dbReference type="SUPFAM" id="SSF51649">
    <property type="entry name" value="RuBisCo, C-terminal domain"/>
    <property type="match status" value="1"/>
</dbReference>
<dbReference type="SUPFAM" id="SSF54966">
    <property type="entry name" value="RuBisCO, large subunit, small (N-terminal) domain"/>
    <property type="match status" value="1"/>
</dbReference>
<dbReference type="PROSITE" id="PS00157">
    <property type="entry name" value="RUBISCO_LARGE"/>
    <property type="match status" value="1"/>
</dbReference>
<name>RBL_ACOCL</name>
<protein>
    <recommendedName>
        <fullName evidence="1">Ribulose bisphosphate carboxylase large chain</fullName>
        <shortName evidence="1">RuBisCO large subunit</shortName>
        <ecNumber evidence="1">4.1.1.39</ecNumber>
    </recommendedName>
</protein>
<organism>
    <name type="scientific">Acorus calamus</name>
    <name type="common">Sweet flag</name>
    <dbReference type="NCBI Taxonomy" id="4465"/>
    <lineage>
        <taxon>Eukaryota</taxon>
        <taxon>Viridiplantae</taxon>
        <taxon>Streptophyta</taxon>
        <taxon>Embryophyta</taxon>
        <taxon>Tracheophyta</taxon>
        <taxon>Spermatophyta</taxon>
        <taxon>Magnoliopsida</taxon>
        <taxon>Liliopsida</taxon>
        <taxon>Acoraceae</taxon>
        <taxon>Acorus</taxon>
    </lineage>
</organism>
<accession>Q3V526</accession>
<keyword id="KW-0007">Acetylation</keyword>
<keyword id="KW-0113">Calvin cycle</keyword>
<keyword id="KW-0120">Carbon dioxide fixation</keyword>
<keyword id="KW-0150">Chloroplast</keyword>
<keyword id="KW-1015">Disulfide bond</keyword>
<keyword id="KW-0456">Lyase</keyword>
<keyword id="KW-0460">Magnesium</keyword>
<keyword id="KW-0479">Metal-binding</keyword>
<keyword id="KW-0488">Methylation</keyword>
<keyword id="KW-0503">Monooxygenase</keyword>
<keyword id="KW-0560">Oxidoreductase</keyword>
<keyword id="KW-0601">Photorespiration</keyword>
<keyword id="KW-0602">Photosynthesis</keyword>
<keyword id="KW-0934">Plastid</keyword>
<sequence length="480" mass="53379">MSPQTETKAGVGFKAGVKDYKLTYYTPEYETKDTDILAAFRVTPQPGVPPEEAGAAVAAESSTGTWTTVWTDGLTSLDRYKGRCYHIEPVVGEQNQYIAYVAYPLDLFEEGSVTNMFTSIVGNVFGFKALRALRLEDLRIPPAYSKTFQGPPHGIQVERDKLNKYGRPLLGCTIKPKLGLSAKNYGRAVYECLRGGLDFTKDDENVNSQPFMRWRDRFLFCAEAIYKAQAETGEIKGHYLNATAGTCEEMMRRAQCARELGVPIVMHDYLTGGFTANTSLAIYCRNNGLLLHIHRAMHAVIDRQKNHGMHFRVLAKALRMSGGDHIHAGTVVGKLEGEREMTLGFVDLLRDDYIEKDRSRGIFFTQDWVSMPGVLPVASGGIHVWHMPALTEIFGDDSVLQFGGGTLGHPWGNAPGAVANRVALEACVQARNEGRDLARESTQIIREACKWSPELAAACEVWKEIKFEFEPVDKLDVKKN</sequence>
<comment type="function">
    <text evidence="1">RuBisCO catalyzes two reactions: the carboxylation of D-ribulose 1,5-bisphosphate, the primary event in carbon dioxide fixation, as well as the oxidative fragmentation of the pentose substrate in the photorespiration process. Both reactions occur simultaneously and in competition at the same active site.</text>
</comment>
<comment type="catalytic activity">
    <reaction evidence="1">
        <text>2 (2R)-3-phosphoglycerate + 2 H(+) = D-ribulose 1,5-bisphosphate + CO2 + H2O</text>
        <dbReference type="Rhea" id="RHEA:23124"/>
        <dbReference type="ChEBI" id="CHEBI:15377"/>
        <dbReference type="ChEBI" id="CHEBI:15378"/>
        <dbReference type="ChEBI" id="CHEBI:16526"/>
        <dbReference type="ChEBI" id="CHEBI:57870"/>
        <dbReference type="ChEBI" id="CHEBI:58272"/>
        <dbReference type="EC" id="4.1.1.39"/>
    </reaction>
</comment>
<comment type="catalytic activity">
    <reaction evidence="1">
        <text>D-ribulose 1,5-bisphosphate + O2 = 2-phosphoglycolate + (2R)-3-phosphoglycerate + 2 H(+)</text>
        <dbReference type="Rhea" id="RHEA:36631"/>
        <dbReference type="ChEBI" id="CHEBI:15378"/>
        <dbReference type="ChEBI" id="CHEBI:15379"/>
        <dbReference type="ChEBI" id="CHEBI:57870"/>
        <dbReference type="ChEBI" id="CHEBI:58033"/>
        <dbReference type="ChEBI" id="CHEBI:58272"/>
    </reaction>
</comment>
<comment type="cofactor">
    <cofactor evidence="1">
        <name>Mg(2+)</name>
        <dbReference type="ChEBI" id="CHEBI:18420"/>
    </cofactor>
    <text evidence="1">Binds 1 Mg(2+) ion per subunit.</text>
</comment>
<comment type="subunit">
    <text evidence="1">Heterohexadecamer of 8 large chains and 8 small chains; disulfide-linked. The disulfide link is formed within the large subunit homodimers.</text>
</comment>
<comment type="subcellular location">
    <subcellularLocation>
        <location>Plastid</location>
        <location>Chloroplast</location>
    </subcellularLocation>
</comment>
<comment type="PTM">
    <text evidence="1">The disulfide bond which can form in the large chain dimeric partners within the hexadecamer appears to be associated with oxidative stress and protein turnover.</text>
</comment>
<comment type="miscellaneous">
    <text evidence="1">The basic functional RuBisCO is composed of a large chain homodimer in a 'head-to-tail' conformation. In form I RuBisCO this homodimer is arranged in a barrel-like tetramer with the small subunits forming a tetrameric 'cap' on each end of the 'barrel'.</text>
</comment>
<comment type="similarity">
    <text evidence="1">Belongs to the RuBisCO large chain family. Type I subfamily.</text>
</comment>
<comment type="sequence caution" evidence="2">
    <conflict type="erroneous initiation">
        <sequence resource="EMBL-CDS" id="CAI53802"/>
    </conflict>
</comment>
<gene>
    <name evidence="1" type="primary">rbcL</name>
</gene>
<feature type="propeptide" id="PRO_0000251416" evidence="1">
    <location>
        <begin position="1"/>
        <end position="2"/>
    </location>
</feature>
<feature type="chain" id="PRO_0000251417" description="Ribulose bisphosphate carboxylase large chain">
    <location>
        <begin position="3"/>
        <end position="480"/>
    </location>
</feature>
<feature type="active site" description="Proton acceptor" evidence="1">
    <location>
        <position position="175"/>
    </location>
</feature>
<feature type="active site" description="Proton acceptor" evidence="1">
    <location>
        <position position="294"/>
    </location>
</feature>
<feature type="binding site" description="in homodimeric partner" evidence="1">
    <location>
        <position position="123"/>
    </location>
    <ligand>
        <name>substrate</name>
    </ligand>
</feature>
<feature type="binding site" evidence="1">
    <location>
        <position position="173"/>
    </location>
    <ligand>
        <name>substrate</name>
    </ligand>
</feature>
<feature type="binding site" evidence="1">
    <location>
        <position position="177"/>
    </location>
    <ligand>
        <name>substrate</name>
    </ligand>
</feature>
<feature type="binding site" description="via carbamate group" evidence="1">
    <location>
        <position position="201"/>
    </location>
    <ligand>
        <name>Mg(2+)</name>
        <dbReference type="ChEBI" id="CHEBI:18420"/>
    </ligand>
</feature>
<feature type="binding site" evidence="1">
    <location>
        <position position="203"/>
    </location>
    <ligand>
        <name>Mg(2+)</name>
        <dbReference type="ChEBI" id="CHEBI:18420"/>
    </ligand>
</feature>
<feature type="binding site" evidence="1">
    <location>
        <position position="204"/>
    </location>
    <ligand>
        <name>Mg(2+)</name>
        <dbReference type="ChEBI" id="CHEBI:18420"/>
    </ligand>
</feature>
<feature type="binding site" evidence="1">
    <location>
        <position position="295"/>
    </location>
    <ligand>
        <name>substrate</name>
    </ligand>
</feature>
<feature type="binding site" evidence="1">
    <location>
        <position position="327"/>
    </location>
    <ligand>
        <name>substrate</name>
    </ligand>
</feature>
<feature type="binding site" evidence="1">
    <location>
        <position position="379"/>
    </location>
    <ligand>
        <name>substrate</name>
    </ligand>
</feature>
<feature type="site" description="Transition state stabilizer" evidence="1">
    <location>
        <position position="334"/>
    </location>
</feature>
<feature type="modified residue" description="N-acetylproline" evidence="1">
    <location>
        <position position="3"/>
    </location>
</feature>
<feature type="modified residue" description="N6,N6,N6-trimethyllysine" evidence="1">
    <location>
        <position position="14"/>
    </location>
</feature>
<feature type="modified residue" description="N6-carboxylysine" evidence="1">
    <location>
        <position position="201"/>
    </location>
</feature>
<feature type="disulfide bond" description="Interchain; in linked form" evidence="1">
    <location>
        <position position="247"/>
    </location>
</feature>